<feature type="initiator methionine" description="Removed" evidence="9">
    <location>
        <position position="1"/>
    </location>
</feature>
<feature type="chain" id="PRO_0000191005" description="Homer protein homolog 1">
    <location>
        <begin position="2"/>
        <end position="354"/>
    </location>
</feature>
<feature type="domain" description="WH1" evidence="5">
    <location>
        <begin position="1"/>
        <end position="110"/>
    </location>
</feature>
<feature type="region of interest" description="Disordered" evidence="6">
    <location>
        <begin position="114"/>
        <end position="173"/>
    </location>
</feature>
<feature type="region of interest" description="Required for tetramerization" evidence="2">
    <location>
        <begin position="290"/>
        <end position="354"/>
    </location>
</feature>
<feature type="coiled-coil region" evidence="4">
    <location>
        <begin position="181"/>
        <end position="352"/>
    </location>
</feature>
<feature type="compositionally biased region" description="Polar residues" evidence="6">
    <location>
        <begin position="138"/>
        <end position="147"/>
    </location>
</feature>
<feature type="compositionally biased region" description="Polar residues" evidence="6">
    <location>
        <begin position="155"/>
        <end position="173"/>
    </location>
</feature>
<feature type="modified residue" description="N-acetylglycine" evidence="9">
    <location>
        <position position="2"/>
    </location>
</feature>
<feature type="modified residue" description="Phosphoserine" evidence="3">
    <location>
        <position position="306"/>
    </location>
</feature>
<feature type="splice variant" id="VSP_009057" description="In isoform 2." evidence="11">
    <location>
        <begin position="99"/>
        <end position="228"/>
    </location>
</feature>
<feature type="splice variant" id="VSP_009058" description="In isoform 3." evidence="11">
    <original>SS</original>
    <variation>RK</variation>
    <location>
        <begin position="176"/>
        <end position="177"/>
    </location>
</feature>
<feature type="splice variant" id="VSP_009059" description="In isoform 3." evidence="11">
    <location>
        <begin position="178"/>
        <end position="354"/>
    </location>
</feature>
<dbReference type="EMBL" id="AF093262">
    <property type="protein sequence ID" value="AAC71026.1"/>
    <property type="molecule type" value="mRNA"/>
</dbReference>
<dbReference type="EMBL" id="Y17829">
    <property type="protein sequence ID" value="CAA76877.1"/>
    <property type="molecule type" value="mRNA"/>
</dbReference>
<dbReference type="EMBL" id="AY189939">
    <property type="protein sequence ID" value="AAO38999.1"/>
    <property type="molecule type" value="mRNA"/>
</dbReference>
<dbReference type="EMBL" id="AY189941">
    <property type="protein sequence ID" value="AAO39001.1"/>
    <property type="molecule type" value="mRNA"/>
</dbReference>
<dbReference type="EMBL" id="BT009846">
    <property type="protein sequence ID" value="AAP88848.1"/>
    <property type="molecule type" value="mRNA"/>
</dbReference>
<dbReference type="EMBL" id="AK312481">
    <property type="protein sequence ID" value="BAG35385.1"/>
    <property type="molecule type" value="mRNA"/>
</dbReference>
<dbReference type="EMBL" id="CH471084">
    <property type="protein sequence ID" value="EAW95836.1"/>
    <property type="molecule type" value="Genomic_DNA"/>
</dbReference>
<dbReference type="EMBL" id="BC015502">
    <property type="protein sequence ID" value="AAH15502.1"/>
    <property type="molecule type" value="mRNA"/>
</dbReference>
<dbReference type="CCDS" id="CCDS43335.1">
    <molecule id="Q86YM7-1"/>
</dbReference>
<dbReference type="CCDS" id="CCDS64188.1">
    <molecule id="Q86YM7-2"/>
</dbReference>
<dbReference type="CCDS" id="CCDS64189.1">
    <molecule id="Q86YM7-3"/>
</dbReference>
<dbReference type="RefSeq" id="NP_001264006.1">
    <molecule id="Q86YM7-2"/>
    <property type="nucleotide sequence ID" value="NM_001277077.1"/>
</dbReference>
<dbReference type="RefSeq" id="NP_001264007.1">
    <molecule id="Q86YM7-3"/>
    <property type="nucleotide sequence ID" value="NM_001277078.1"/>
</dbReference>
<dbReference type="RefSeq" id="NP_004263.1">
    <molecule id="Q86YM7-1"/>
    <property type="nucleotide sequence ID" value="NM_004272.5"/>
</dbReference>
<dbReference type="BMRB" id="Q86YM7"/>
<dbReference type="SMR" id="Q86YM7"/>
<dbReference type="BioGRID" id="114845">
    <property type="interactions" value="111"/>
</dbReference>
<dbReference type="FunCoup" id="Q86YM7">
    <property type="interactions" value="1055"/>
</dbReference>
<dbReference type="IntAct" id="Q86YM7">
    <property type="interactions" value="75"/>
</dbReference>
<dbReference type="MINT" id="Q86YM7"/>
<dbReference type="STRING" id="9606.ENSP00000334382"/>
<dbReference type="GlyGen" id="Q86YM7">
    <property type="glycosylation" value="1 site, 1 O-linked glycan (1 site)"/>
</dbReference>
<dbReference type="iPTMnet" id="Q86YM7"/>
<dbReference type="PhosphoSitePlus" id="Q86YM7"/>
<dbReference type="BioMuta" id="HOMER1"/>
<dbReference type="DMDM" id="38604765"/>
<dbReference type="jPOST" id="Q86YM7"/>
<dbReference type="MassIVE" id="Q86YM7"/>
<dbReference type="PaxDb" id="9606-ENSP00000334382"/>
<dbReference type="PeptideAtlas" id="Q86YM7"/>
<dbReference type="ProteomicsDB" id="70435">
    <molecule id="Q86YM7-1"/>
</dbReference>
<dbReference type="ProteomicsDB" id="70436">
    <molecule id="Q86YM7-2"/>
</dbReference>
<dbReference type="ProteomicsDB" id="70437">
    <molecule id="Q86YM7-3"/>
</dbReference>
<dbReference type="Pumba" id="Q86YM7"/>
<dbReference type="ABCD" id="Q86YM7">
    <property type="antibodies" value="4 sequenced antibodies"/>
</dbReference>
<dbReference type="Antibodypedia" id="3836">
    <property type="antibodies" value="404 antibodies from 40 providers"/>
</dbReference>
<dbReference type="DNASU" id="9456"/>
<dbReference type="Ensembl" id="ENST00000282260.10">
    <molecule id="Q86YM7-2"/>
    <property type="protein sequence ID" value="ENSP00000282260.6"/>
    <property type="gene ID" value="ENSG00000152413.15"/>
</dbReference>
<dbReference type="Ensembl" id="ENST00000334082.11">
    <molecule id="Q86YM7-1"/>
    <property type="protein sequence ID" value="ENSP00000334382.6"/>
    <property type="gene ID" value="ENSG00000152413.15"/>
</dbReference>
<dbReference type="Ensembl" id="ENST00000508576.5">
    <molecule id="Q86YM7-3"/>
    <property type="protein sequence ID" value="ENSP00000426651.1"/>
    <property type="gene ID" value="ENSG00000152413.15"/>
</dbReference>
<dbReference type="GeneID" id="9456"/>
<dbReference type="KEGG" id="hsa:9456"/>
<dbReference type="MANE-Select" id="ENST00000334082.11">
    <property type="protein sequence ID" value="ENSP00000334382.6"/>
    <property type="RefSeq nucleotide sequence ID" value="NM_004272.5"/>
    <property type="RefSeq protein sequence ID" value="NP_004263.1"/>
</dbReference>
<dbReference type="UCSC" id="uc003kfy.5">
    <molecule id="Q86YM7-1"/>
    <property type="organism name" value="human"/>
</dbReference>
<dbReference type="AGR" id="HGNC:17512"/>
<dbReference type="CTD" id="9456"/>
<dbReference type="DisGeNET" id="9456"/>
<dbReference type="GeneCards" id="HOMER1"/>
<dbReference type="HGNC" id="HGNC:17512">
    <property type="gene designation" value="HOMER1"/>
</dbReference>
<dbReference type="HPA" id="ENSG00000152413">
    <property type="expression patterns" value="Tissue enhanced (brain, skeletal muscle)"/>
</dbReference>
<dbReference type="MIM" id="604798">
    <property type="type" value="gene"/>
</dbReference>
<dbReference type="neXtProt" id="NX_Q86YM7"/>
<dbReference type="OpenTargets" id="ENSG00000152413"/>
<dbReference type="PharmGKB" id="PA134972608"/>
<dbReference type="VEuPathDB" id="HostDB:ENSG00000152413"/>
<dbReference type="eggNOG" id="ENOG502QR3K">
    <property type="taxonomic scope" value="Eukaryota"/>
</dbReference>
<dbReference type="GeneTree" id="ENSGT00940000156354"/>
<dbReference type="HOGENOM" id="CLU_033940_0_0_1"/>
<dbReference type="InParanoid" id="Q86YM7"/>
<dbReference type="OMA" id="QXSAISK"/>
<dbReference type="OrthoDB" id="9983798at2759"/>
<dbReference type="PAN-GO" id="Q86YM7">
    <property type="GO annotations" value="7 GO annotations based on evolutionary models"/>
</dbReference>
<dbReference type="PhylomeDB" id="Q86YM7"/>
<dbReference type="TreeFam" id="TF325627"/>
<dbReference type="PathwayCommons" id="Q86YM7"/>
<dbReference type="Reactome" id="R-HSA-6794361">
    <property type="pathway name" value="Neurexins and neuroligins"/>
</dbReference>
<dbReference type="SignaLink" id="Q86YM7"/>
<dbReference type="SIGNOR" id="Q86YM7"/>
<dbReference type="BioGRID-ORCS" id="9456">
    <property type="hits" value="4 hits in 1154 CRISPR screens"/>
</dbReference>
<dbReference type="CD-CODE" id="FB4E32DD">
    <property type="entry name" value="Presynaptic clusters and postsynaptic densities"/>
</dbReference>
<dbReference type="ChiTaRS" id="HOMER1">
    <property type="organism name" value="human"/>
</dbReference>
<dbReference type="GeneWiki" id="HOMER1"/>
<dbReference type="GenomeRNAi" id="9456"/>
<dbReference type="Pharos" id="Q86YM7">
    <property type="development level" value="Tbio"/>
</dbReference>
<dbReference type="PRO" id="PR:Q86YM7"/>
<dbReference type="Proteomes" id="UP000005640">
    <property type="component" value="Chromosome 5"/>
</dbReference>
<dbReference type="RNAct" id="Q86YM7">
    <property type="molecule type" value="protein"/>
</dbReference>
<dbReference type="Bgee" id="ENSG00000152413">
    <property type="expression patterns" value="Expressed in Brodmann (1909) area 23 and 212 other cell types or tissues"/>
</dbReference>
<dbReference type="ExpressionAtlas" id="Q86YM7">
    <property type="expression patterns" value="baseline and differential"/>
</dbReference>
<dbReference type="GO" id="GO:0045177">
    <property type="term" value="C:apical part of cell"/>
    <property type="evidence" value="ECO:0007669"/>
    <property type="project" value="Ensembl"/>
</dbReference>
<dbReference type="GO" id="GO:0030424">
    <property type="term" value="C:axon"/>
    <property type="evidence" value="ECO:0007669"/>
    <property type="project" value="Ensembl"/>
</dbReference>
<dbReference type="GO" id="GO:0043034">
    <property type="term" value="C:costamere"/>
    <property type="evidence" value="ECO:0007669"/>
    <property type="project" value="Ensembl"/>
</dbReference>
<dbReference type="GO" id="GO:0005737">
    <property type="term" value="C:cytoplasm"/>
    <property type="evidence" value="ECO:0000318"/>
    <property type="project" value="GO_Central"/>
</dbReference>
<dbReference type="GO" id="GO:0005829">
    <property type="term" value="C:cytosol"/>
    <property type="evidence" value="ECO:0000304"/>
    <property type="project" value="Reactome"/>
</dbReference>
<dbReference type="GO" id="GO:0030425">
    <property type="term" value="C:dendrite"/>
    <property type="evidence" value="ECO:0000318"/>
    <property type="project" value="GO_Central"/>
</dbReference>
<dbReference type="GO" id="GO:0043197">
    <property type="term" value="C:dendritic spine"/>
    <property type="evidence" value="ECO:0007669"/>
    <property type="project" value="UniProtKB-SubCell"/>
</dbReference>
<dbReference type="GO" id="GO:0098978">
    <property type="term" value="C:glutamatergic synapse"/>
    <property type="evidence" value="ECO:0007669"/>
    <property type="project" value="Ensembl"/>
</dbReference>
<dbReference type="GO" id="GO:0044309">
    <property type="term" value="C:neuron spine"/>
    <property type="evidence" value="ECO:0000250"/>
    <property type="project" value="UniProtKB"/>
</dbReference>
<dbReference type="GO" id="GO:0005886">
    <property type="term" value="C:plasma membrane"/>
    <property type="evidence" value="ECO:0000318"/>
    <property type="project" value="GO_Central"/>
</dbReference>
<dbReference type="GO" id="GO:0099524">
    <property type="term" value="C:postsynaptic cytosol"/>
    <property type="evidence" value="ECO:0007669"/>
    <property type="project" value="Ensembl"/>
</dbReference>
<dbReference type="GO" id="GO:0014069">
    <property type="term" value="C:postsynaptic density"/>
    <property type="evidence" value="ECO:0000318"/>
    <property type="project" value="GO_Central"/>
</dbReference>
<dbReference type="GO" id="GO:0030018">
    <property type="term" value="C:Z disc"/>
    <property type="evidence" value="ECO:0007669"/>
    <property type="project" value="Ensembl"/>
</dbReference>
<dbReference type="GO" id="GO:0035256">
    <property type="term" value="F:G protein-coupled glutamate receptor binding"/>
    <property type="evidence" value="ECO:0000318"/>
    <property type="project" value="GO_Central"/>
</dbReference>
<dbReference type="GO" id="GO:0035591">
    <property type="term" value="F:signaling adaptor activity"/>
    <property type="evidence" value="ECO:0000305"/>
    <property type="project" value="BHF-UCL"/>
</dbReference>
<dbReference type="GO" id="GO:0044325">
    <property type="term" value="F:transmembrane transporter binding"/>
    <property type="evidence" value="ECO:0000353"/>
    <property type="project" value="BHF-UCL"/>
</dbReference>
<dbReference type="GO" id="GO:0048148">
    <property type="term" value="P:behavioral response to cocaine"/>
    <property type="evidence" value="ECO:0007669"/>
    <property type="project" value="Ensembl"/>
</dbReference>
<dbReference type="GO" id="GO:0007268">
    <property type="term" value="P:chemical synaptic transmission"/>
    <property type="evidence" value="ECO:0000304"/>
    <property type="project" value="ProtInc"/>
</dbReference>
<dbReference type="GO" id="GO:0007216">
    <property type="term" value="P:G protein-coupled glutamate receptor signaling pathway"/>
    <property type="evidence" value="ECO:0000318"/>
    <property type="project" value="GO_Central"/>
</dbReference>
<dbReference type="GO" id="GO:0007206">
    <property type="term" value="P:phospholipase C-activating G protein-coupled glutamate receptor signaling pathway"/>
    <property type="evidence" value="ECO:0000304"/>
    <property type="project" value="ProtInc"/>
</dbReference>
<dbReference type="GO" id="GO:0051928">
    <property type="term" value="P:positive regulation of calcium ion transport"/>
    <property type="evidence" value="ECO:0007669"/>
    <property type="project" value="Ensembl"/>
</dbReference>
<dbReference type="GO" id="GO:0009967">
    <property type="term" value="P:positive regulation of signal transduction"/>
    <property type="evidence" value="ECO:0000305"/>
    <property type="project" value="BHF-UCL"/>
</dbReference>
<dbReference type="GO" id="GO:0051262">
    <property type="term" value="P:protein tetramerization"/>
    <property type="evidence" value="ECO:0000250"/>
    <property type="project" value="UniProtKB"/>
</dbReference>
<dbReference type="GO" id="GO:0090279">
    <property type="term" value="P:regulation of calcium ion import"/>
    <property type="evidence" value="ECO:0007669"/>
    <property type="project" value="Ensembl"/>
</dbReference>
<dbReference type="GO" id="GO:1902950">
    <property type="term" value="P:regulation of dendritic spine maintenance"/>
    <property type="evidence" value="ECO:0000250"/>
    <property type="project" value="UniProtKB"/>
</dbReference>
<dbReference type="GO" id="GO:2001256">
    <property type="term" value="P:regulation of store-operated calcium entry"/>
    <property type="evidence" value="ECO:0000318"/>
    <property type="project" value="GO_Central"/>
</dbReference>
<dbReference type="GO" id="GO:0051966">
    <property type="term" value="P:regulation of synaptic transmission, glutamatergic"/>
    <property type="evidence" value="ECO:0000250"/>
    <property type="project" value="UniProtKB"/>
</dbReference>
<dbReference type="GO" id="GO:0051592">
    <property type="term" value="P:response to calcium ion"/>
    <property type="evidence" value="ECO:0000314"/>
    <property type="project" value="BHF-UCL"/>
</dbReference>
<dbReference type="GO" id="GO:0003009">
    <property type="term" value="P:skeletal muscle contraction"/>
    <property type="evidence" value="ECO:0007669"/>
    <property type="project" value="Ensembl"/>
</dbReference>
<dbReference type="GO" id="GO:0048741">
    <property type="term" value="P:skeletal muscle fiber development"/>
    <property type="evidence" value="ECO:0007669"/>
    <property type="project" value="Ensembl"/>
</dbReference>
<dbReference type="CDD" id="cd01206">
    <property type="entry name" value="EVH1_Homer_Vesl"/>
    <property type="match status" value="1"/>
</dbReference>
<dbReference type="FunFam" id="1.20.5.1700:FF:000003">
    <property type="entry name" value="Homer homolog 1 (Drosophila)"/>
    <property type="match status" value="1"/>
</dbReference>
<dbReference type="FunFam" id="2.30.29.30:FF:000014">
    <property type="entry name" value="Homer homolog 1 (Drosophila)"/>
    <property type="match status" value="1"/>
</dbReference>
<dbReference type="Gene3D" id="1.20.5.1700">
    <property type="match status" value="1"/>
</dbReference>
<dbReference type="Gene3D" id="2.30.29.30">
    <property type="entry name" value="Pleckstrin-homology domain (PH domain)/Phosphotyrosine-binding domain (PTB)"/>
    <property type="match status" value="1"/>
</dbReference>
<dbReference type="InterPro" id="IPR045027">
    <property type="entry name" value="Homer"/>
</dbReference>
<dbReference type="InterPro" id="IPR044100">
    <property type="entry name" value="Homer_EVH1"/>
</dbReference>
<dbReference type="InterPro" id="IPR011993">
    <property type="entry name" value="PH-like_dom_sf"/>
</dbReference>
<dbReference type="InterPro" id="IPR000697">
    <property type="entry name" value="WH1/EVH1_dom"/>
</dbReference>
<dbReference type="PANTHER" id="PTHR10918">
    <property type="entry name" value="HOMER"/>
    <property type="match status" value="1"/>
</dbReference>
<dbReference type="Pfam" id="PF00568">
    <property type="entry name" value="WH1"/>
    <property type="match status" value="1"/>
</dbReference>
<dbReference type="SMART" id="SM00461">
    <property type="entry name" value="WH1"/>
    <property type="match status" value="1"/>
</dbReference>
<dbReference type="SUPFAM" id="SSF50729">
    <property type="entry name" value="PH domain-like"/>
    <property type="match status" value="1"/>
</dbReference>
<dbReference type="SUPFAM" id="SSF57997">
    <property type="entry name" value="Tropomyosin"/>
    <property type="match status" value="1"/>
</dbReference>
<dbReference type="PROSITE" id="PS50229">
    <property type="entry name" value="WH1"/>
    <property type="match status" value="1"/>
</dbReference>
<proteinExistence type="evidence at protein level"/>
<gene>
    <name evidence="13" type="primary">HOMER1</name>
    <name evidence="10" type="synonym">SYN47</name>
</gene>
<accession>Q86YM7</accession>
<accession>B2R688</accession>
<accession>O96003</accession>
<accession>Q86YM5</accession>
<keyword id="KW-0007">Acetylation</keyword>
<keyword id="KW-0025">Alternative splicing</keyword>
<keyword id="KW-0966">Cell projection</keyword>
<keyword id="KW-0175">Coiled coil</keyword>
<keyword id="KW-0963">Cytoplasm</keyword>
<keyword id="KW-0597">Phosphoprotein</keyword>
<keyword id="KW-1267">Proteomics identification</keyword>
<keyword id="KW-1185">Reference proteome</keyword>
<keyword id="KW-0770">Synapse</keyword>
<organism>
    <name type="scientific">Homo sapiens</name>
    <name type="common">Human</name>
    <dbReference type="NCBI Taxonomy" id="9606"/>
    <lineage>
        <taxon>Eukaryota</taxon>
        <taxon>Metazoa</taxon>
        <taxon>Chordata</taxon>
        <taxon>Craniata</taxon>
        <taxon>Vertebrata</taxon>
        <taxon>Euteleostomi</taxon>
        <taxon>Mammalia</taxon>
        <taxon>Eutheria</taxon>
        <taxon>Euarchontoglires</taxon>
        <taxon>Primates</taxon>
        <taxon>Haplorrhini</taxon>
        <taxon>Catarrhini</taxon>
        <taxon>Hominidae</taxon>
        <taxon>Homo</taxon>
    </lineage>
</organism>
<name>HOME1_HUMAN</name>
<comment type="function">
    <text evidence="2 8">Postsynaptic density scaffolding protein. Binds and cross-links cytoplasmic regions of GRM1, GRM5, ITPR1, DNM3, RYR1, RYR2, SHANK1 and SHANK3. By physically linking GRM1 and GRM5 with ER-associated ITPR1 receptors, it aids the coupling of surface receptors to intracellular calcium release. May also couple GRM1 to PI3 kinase through its interaction with AGAP2. Isoform 1 regulates the trafficking and surface expression of GRM5. Isoform 3 acts as a natural dominant negative, in dynamic competition with constitutively expressed isoform 1 to regulate synaptic metabotropic glutamate function. Isoform 3, may be involved in the structural changes that occur at synapses during long-lasting neuronal plasticity and development. Forms a high-order complex with SHANK1, which in turn is necessary for the structural and functional integrity of dendritic spines (By similarity). Negatively regulates T cell activation by inhibiting the calcineurin-NFAT pathway. Acts by competing with calcineurin/PPP3CA for NFAT protein binding, hence preventing NFAT activation by PPP3CA (PubMed:18218901).</text>
</comment>
<comment type="subunit">
    <text evidence="2 3 7 8">Tetramer; this tetrameric structure is critical for forming the high-order complex with SHANK1, which in turn is necessary for the structural and functional integrity of dendritic spines (By similarity). Interacts with GRM1, GRM5, ITPR1, DNM3, RYR1, RYR2 and SHANK3 (PubMed:10464340). Interacts with IFT57 and OPHN1 (By similarity). Isoform 1 encodes a coiled-coil structure that mediates homo- and heteromultimerization (By similarity). Interacts with SHANK1; forms high-order polymerized complex with a mesh-like network structure, at least composed of SHANK1, HOMER1 and DLGAP1; the complex formation is SHANK1 multimerization dependent (By similarity). Interacts with NFATC4 (PubMed:18218901). Interacts with DAGLA (via PPXXF motif); this interaction is required for the cell membrane localization of DAGLA (By similarity). Interacts with SRGAP2 (By similarity).</text>
</comment>
<comment type="interaction">
    <interactant intactId="EBI-746815">
        <id>Q86YM7</id>
    </interactant>
    <interactant intactId="EBI-11743294">
        <id>Q8IZP0-5</id>
        <label>ABI1</label>
    </interactant>
    <organismsDiffer>false</organismsDiffer>
    <experiments>3</experiments>
</comment>
<comment type="interaction">
    <interactant intactId="EBI-746815">
        <id>Q86YM7</id>
    </interactant>
    <interactant intactId="EBI-742038">
        <id>Q9P2A4</id>
        <label>ABI3</label>
    </interactant>
    <organismsDiffer>false</organismsDiffer>
    <experiments>4</experiments>
</comment>
<comment type="interaction">
    <interactant intactId="EBI-746815">
        <id>Q86YM7</id>
    </interactant>
    <interactant intactId="EBI-12412735">
        <id>Q12904-2</id>
        <label>AIMP1</label>
    </interactant>
    <organismsDiffer>false</organismsDiffer>
    <experiments>3</experiments>
</comment>
<comment type="interaction">
    <interactant intactId="EBI-746815">
        <id>Q86YM7</id>
    </interactant>
    <interactant intactId="EBI-741210">
        <id>Q0VDD7</id>
        <label>BRME1</label>
    </interactant>
    <organismsDiffer>false</organismsDiffer>
    <experiments>3</experiments>
</comment>
<comment type="interaction">
    <interactant intactId="EBI-746815">
        <id>Q86YM7</id>
    </interactant>
    <interactant intactId="EBI-2350265">
        <id>Q7L2Z9</id>
        <label>CENPQ</label>
    </interactant>
    <organismsDiffer>false</organismsDiffer>
    <experiments>6</experiments>
</comment>
<comment type="interaction">
    <interactant intactId="EBI-746815">
        <id>Q86YM7</id>
    </interactant>
    <interactant intactId="EBI-8468186">
        <id>Q8IZU1</id>
        <label>FAM9A</label>
    </interactant>
    <organismsDiffer>false</organismsDiffer>
    <experiments>3</experiments>
</comment>
<comment type="interaction">
    <interactant intactId="EBI-746815">
        <id>Q86YM7</id>
    </interactant>
    <interactant intactId="EBI-11958845">
        <id>O94868-3</id>
        <label>FCHSD2</label>
    </interactant>
    <organismsDiffer>false</organismsDiffer>
    <experiments>3</experiments>
</comment>
<comment type="interaction">
    <interactant intactId="EBI-746815">
        <id>Q86YM7</id>
    </interactant>
    <interactant intactId="EBI-748420">
        <id>Q9NSC5</id>
        <label>HOMER3</label>
    </interactant>
    <organismsDiffer>false</organismsDiffer>
    <experiments>18</experiments>
</comment>
<comment type="interaction">
    <interactant intactId="EBI-746815">
        <id>Q86YM7</id>
    </interactant>
    <interactant intactId="EBI-12035052">
        <id>A5PKX9</id>
        <label>INADL</label>
    </interactant>
    <organismsDiffer>false</organismsDiffer>
    <experiments>3</experiments>
</comment>
<comment type="interaction">
    <interactant intactId="EBI-746815">
        <id>Q86YM7</id>
    </interactant>
    <interactant intactId="EBI-741048">
        <id>Q7Z3B4</id>
        <label>NUP54</label>
    </interactant>
    <organismsDiffer>false</organismsDiffer>
    <experiments>4</experiments>
</comment>
<comment type="interaction">
    <interactant intactId="EBI-746815">
        <id>Q86YM7</id>
    </interactant>
    <interactant intactId="EBI-348567">
        <id>O75928-2</id>
        <label>PIAS2</label>
    </interactant>
    <organismsDiffer>false</organismsDiffer>
    <experiments>3</experiments>
</comment>
<comment type="interaction">
    <interactant intactId="EBI-746815">
        <id>Q86YM7</id>
    </interactant>
    <interactant intactId="EBI-21251460">
        <id>O60260-5</id>
        <label>PRKN</label>
    </interactant>
    <organismsDiffer>false</organismsDiffer>
    <experiments>6</experiments>
</comment>
<comment type="interaction">
    <interactant intactId="EBI-746815">
        <id>Q86YM7</id>
    </interactant>
    <interactant intactId="EBI-948156">
        <id>Q9Y4B4</id>
        <label>RAD54L2</label>
    </interactant>
    <organismsDiffer>false</organismsDiffer>
    <experiments>3</experiments>
</comment>
<comment type="interaction">
    <interactant intactId="EBI-746815">
        <id>Q86YM7</id>
    </interactant>
    <interactant intactId="EBI-3437896">
        <id>Q86YV0</id>
        <label>RASAL3</label>
    </interactant>
    <organismsDiffer>false</organismsDiffer>
    <experiments>3</experiments>
</comment>
<comment type="interaction">
    <interactant intactId="EBI-746815">
        <id>Q86YM7</id>
    </interactant>
    <interactant intactId="EBI-2320464">
        <id>Q9BW04</id>
        <label>SARG</label>
    </interactant>
    <organismsDiffer>false</organismsDiffer>
    <experiments>7</experiments>
</comment>
<comment type="interaction">
    <interactant intactId="EBI-746815">
        <id>Q86YM7</id>
    </interactant>
    <interactant intactId="EBI-11959011">
        <id>Q9UPX8-4</id>
        <label>SHANK2</label>
    </interactant>
    <organismsDiffer>false</organismsDiffer>
    <experiments>3</experiments>
</comment>
<comment type="interaction">
    <interactant intactId="EBI-746815">
        <id>Q86YM7</id>
    </interactant>
    <interactant intactId="EBI-11958386">
        <id>Q6PIF2</id>
        <label>SYCE2</label>
    </interactant>
    <organismsDiffer>false</organismsDiffer>
    <experiments>3</experiments>
</comment>
<comment type="interaction">
    <interactant intactId="EBI-746815">
        <id>Q86YM7</id>
    </interactant>
    <interactant intactId="EBI-523498">
        <id>O00463</id>
        <label>TRAF5</label>
    </interactant>
    <organismsDiffer>false</organismsDiffer>
    <experiments>5</experiments>
</comment>
<comment type="interaction">
    <interactant intactId="EBI-746815">
        <id>Q86YM7</id>
    </interactant>
    <interactant intactId="EBI-17634549">
        <id>Q9UJ78-2</id>
        <label>ZMYM5</label>
    </interactant>
    <organismsDiffer>false</organismsDiffer>
    <experiments>3</experiments>
</comment>
<comment type="subcellular location">
    <subcellularLocation>
        <location evidence="1">Cytoplasm</location>
    </subcellularLocation>
    <subcellularLocation>
        <location evidence="1">Postsynaptic density</location>
    </subcellularLocation>
    <subcellularLocation>
        <location evidence="1">Synapse</location>
    </subcellularLocation>
    <subcellularLocation>
        <location evidence="2">Cell projection</location>
        <location evidence="2">Dendritic spine</location>
    </subcellularLocation>
    <text evidence="1">Isoform 1 inhibits surface expression of GRM5 causing it to be retained in the endoplasmic reticulum.</text>
</comment>
<comment type="alternative products">
    <event type="alternative splicing"/>
    <isoform>
        <id>Q86YM7-1</id>
        <name>1</name>
        <name>1b</name>
        <sequence type="displayed"/>
    </isoform>
    <isoform>
        <id>Q86YM7-2</id>
        <name>2</name>
        <name>1e</name>
        <sequence type="described" ref="VSP_009057"/>
    </isoform>
    <isoform>
        <id>Q86YM7-3</id>
        <name>3</name>
        <name>1h</name>
        <sequence type="described" ref="VSP_009058 VSP_009059"/>
    </isoform>
</comment>
<comment type="domain">
    <text evidence="2">The WH1 domain interacts with the PPXXF motif in GRM1, GRM5, RYR1, RYR2, ITPR1, SHANK 1 and SHANK3. The coiled-Coil domain forms an antiparallel tetrameric arrangement (By similarity).</text>
</comment>
<comment type="similarity">
    <text evidence="12">Belongs to the Homer family.</text>
</comment>
<evidence type="ECO:0000250" key="1"/>
<evidence type="ECO:0000250" key="2">
    <source>
        <dbReference type="UniProtKB" id="Q9Z214"/>
    </source>
</evidence>
<evidence type="ECO:0000250" key="3">
    <source>
        <dbReference type="UniProtKB" id="Q9Z2Y3"/>
    </source>
</evidence>
<evidence type="ECO:0000255" key="4"/>
<evidence type="ECO:0000255" key="5">
    <source>
        <dbReference type="PROSITE-ProRule" id="PRU00410"/>
    </source>
</evidence>
<evidence type="ECO:0000256" key="6">
    <source>
        <dbReference type="SAM" id="MobiDB-lite"/>
    </source>
</evidence>
<evidence type="ECO:0000269" key="7">
    <source>
    </source>
</evidence>
<evidence type="ECO:0000269" key="8">
    <source>
    </source>
</evidence>
<evidence type="ECO:0000269" key="9">
    <source>
    </source>
</evidence>
<evidence type="ECO:0000303" key="10">
    <source ref="2"/>
</evidence>
<evidence type="ECO:0000303" key="11">
    <source ref="3"/>
</evidence>
<evidence type="ECO:0000305" key="12"/>
<evidence type="ECO:0000312" key="13">
    <source>
        <dbReference type="HGNC" id="HGNC:17512"/>
    </source>
</evidence>
<protein>
    <recommendedName>
        <fullName evidence="12">Homer protein homolog 1</fullName>
        <shortName>Homer-1</shortName>
    </recommendedName>
</protein>
<sequence length="354" mass="40277">MGEQPIFSTRAHVFQIDPNTKKNWVPTSKHAVTVSYFYDSTRNVYRIISLDGSKAIINSTITPNMTFTKTSQKFGQWADSRANTVYGLGFSSEHHLSKFAEKFQEFKEAARLAKEKSQEKMELTSTPSQESAGGDLQSPLTPESINGTDDERTPDVTQNSEPRAEPTQNALPFSHSSAISKHWEAELATLKGNNAKLTAALLESTANVKQWKQQLAAYQEEAERLHKRVTELECVSSQANAVHTHKTELNQTIQELEETLKLKEEEIERLKQEIDNARELQEQRDSLTQKLQEVEIRNKDLEGQLSDLEQRLEKSQNEQEAFRNNLKTLLEILDGKIFELTELRDNLAKLLECS</sequence>
<reference key="1">
    <citation type="journal article" date="1998" name="Neuron">
        <title>Homer regulates the association of group 1 metabotropic glutamate receptors with multivalent complexes of homer-related, synaptic proteins.</title>
        <authorList>
            <person name="Xiao B."/>
            <person name="Tu J.C."/>
            <person name="Petralia R.S."/>
            <person name="Yuan J.P."/>
            <person name="Doan A."/>
            <person name="Breder C.D."/>
            <person name="Ruggiero A."/>
            <person name="Lanahan A.A."/>
            <person name="Wenthold R.J."/>
            <person name="Worley P.F."/>
        </authorList>
    </citation>
    <scope>NUCLEOTIDE SEQUENCE [MRNA] (ISOFORM 1)</scope>
    <source>
        <tissue>Frontal cortex</tissue>
    </source>
</reference>
<reference key="2">
    <citation type="submission" date="1998-07" db="EMBL/GenBank/DDBJ databases">
        <title>Cloning and molecular characterization of a human cDNA Syn47 showing strong homology to the cDNA of the rat protein Homer.</title>
        <authorList>
            <person name="Nickels A."/>
            <person name="Heckel D."/>
            <person name="Sahin U."/>
            <person name="Tuereci O."/>
            <person name="Koch B."/>
            <person name="Meese E."/>
            <person name="Pfreundschuh M."/>
            <person name="Montenarh M."/>
        </authorList>
    </citation>
    <scope>NUCLEOTIDE SEQUENCE [MRNA] (ISOFORM 1)</scope>
    <source>
        <tissue>Synovial cell</tissue>
    </source>
</reference>
<reference key="3">
    <citation type="submission" date="2002-12" db="EMBL/GenBank/DDBJ databases">
        <title>Multiple splice isoforms of the HOMER1 gene.</title>
        <authorList>
            <person name="Klugmann M."/>
            <person name="Leichtlein C.B."/>
            <person name="Klaussner B.K."/>
            <person name="During M.J."/>
        </authorList>
    </citation>
    <scope>NUCLEOTIDE SEQUENCE [MRNA] (ISOFORMS 2 AND 3)</scope>
    <source>
        <tissue>Brain</tissue>
    </source>
</reference>
<reference key="4">
    <citation type="submission" date="2003-08" db="EMBL/GenBank/DDBJ databases">
        <title>Cloning of human full-length CDSs in BD Creator(TM) system donor vector.</title>
        <authorList>
            <person name="Kalnine N."/>
            <person name="Chen X."/>
            <person name="Rolfs A."/>
            <person name="Halleck A."/>
            <person name="Hines L."/>
            <person name="Eisenstein S."/>
            <person name="Koundinya M."/>
            <person name="Raphael J."/>
            <person name="Moreira D."/>
            <person name="Kelley T."/>
            <person name="LaBaer J."/>
            <person name="Lin Y."/>
            <person name="Phelan M."/>
            <person name="Farmer A."/>
        </authorList>
    </citation>
    <scope>NUCLEOTIDE SEQUENCE [LARGE SCALE MRNA] (ISOFORM 1)</scope>
</reference>
<reference key="5">
    <citation type="journal article" date="2004" name="Nat. Genet.">
        <title>Complete sequencing and characterization of 21,243 full-length human cDNAs.</title>
        <authorList>
            <person name="Ota T."/>
            <person name="Suzuki Y."/>
            <person name="Nishikawa T."/>
            <person name="Otsuki T."/>
            <person name="Sugiyama T."/>
            <person name="Irie R."/>
            <person name="Wakamatsu A."/>
            <person name="Hayashi K."/>
            <person name="Sato H."/>
            <person name="Nagai K."/>
            <person name="Kimura K."/>
            <person name="Makita H."/>
            <person name="Sekine M."/>
            <person name="Obayashi M."/>
            <person name="Nishi T."/>
            <person name="Shibahara T."/>
            <person name="Tanaka T."/>
            <person name="Ishii S."/>
            <person name="Yamamoto J."/>
            <person name="Saito K."/>
            <person name="Kawai Y."/>
            <person name="Isono Y."/>
            <person name="Nakamura Y."/>
            <person name="Nagahari K."/>
            <person name="Murakami K."/>
            <person name="Yasuda T."/>
            <person name="Iwayanagi T."/>
            <person name="Wagatsuma M."/>
            <person name="Shiratori A."/>
            <person name="Sudo H."/>
            <person name="Hosoiri T."/>
            <person name="Kaku Y."/>
            <person name="Kodaira H."/>
            <person name="Kondo H."/>
            <person name="Sugawara M."/>
            <person name="Takahashi M."/>
            <person name="Kanda K."/>
            <person name="Yokoi T."/>
            <person name="Furuya T."/>
            <person name="Kikkawa E."/>
            <person name="Omura Y."/>
            <person name="Abe K."/>
            <person name="Kamihara K."/>
            <person name="Katsuta N."/>
            <person name="Sato K."/>
            <person name="Tanikawa M."/>
            <person name="Yamazaki M."/>
            <person name="Ninomiya K."/>
            <person name="Ishibashi T."/>
            <person name="Yamashita H."/>
            <person name="Murakawa K."/>
            <person name="Fujimori K."/>
            <person name="Tanai H."/>
            <person name="Kimata M."/>
            <person name="Watanabe M."/>
            <person name="Hiraoka S."/>
            <person name="Chiba Y."/>
            <person name="Ishida S."/>
            <person name="Ono Y."/>
            <person name="Takiguchi S."/>
            <person name="Watanabe S."/>
            <person name="Yosida M."/>
            <person name="Hotuta T."/>
            <person name="Kusano J."/>
            <person name="Kanehori K."/>
            <person name="Takahashi-Fujii A."/>
            <person name="Hara H."/>
            <person name="Tanase T.-O."/>
            <person name="Nomura Y."/>
            <person name="Togiya S."/>
            <person name="Komai F."/>
            <person name="Hara R."/>
            <person name="Takeuchi K."/>
            <person name="Arita M."/>
            <person name="Imose N."/>
            <person name="Musashino K."/>
            <person name="Yuuki H."/>
            <person name="Oshima A."/>
            <person name="Sasaki N."/>
            <person name="Aotsuka S."/>
            <person name="Yoshikawa Y."/>
            <person name="Matsunawa H."/>
            <person name="Ichihara T."/>
            <person name="Shiohata N."/>
            <person name="Sano S."/>
            <person name="Moriya S."/>
            <person name="Momiyama H."/>
            <person name="Satoh N."/>
            <person name="Takami S."/>
            <person name="Terashima Y."/>
            <person name="Suzuki O."/>
            <person name="Nakagawa S."/>
            <person name="Senoh A."/>
            <person name="Mizoguchi H."/>
            <person name="Goto Y."/>
            <person name="Shimizu F."/>
            <person name="Wakebe H."/>
            <person name="Hishigaki H."/>
            <person name="Watanabe T."/>
            <person name="Sugiyama A."/>
            <person name="Takemoto M."/>
            <person name="Kawakami B."/>
            <person name="Yamazaki M."/>
            <person name="Watanabe K."/>
            <person name="Kumagai A."/>
            <person name="Itakura S."/>
            <person name="Fukuzumi Y."/>
            <person name="Fujimori Y."/>
            <person name="Komiyama M."/>
            <person name="Tashiro H."/>
            <person name="Tanigami A."/>
            <person name="Fujiwara T."/>
            <person name="Ono T."/>
            <person name="Yamada K."/>
            <person name="Fujii Y."/>
            <person name="Ozaki K."/>
            <person name="Hirao M."/>
            <person name="Ohmori Y."/>
            <person name="Kawabata A."/>
            <person name="Hikiji T."/>
            <person name="Kobatake N."/>
            <person name="Inagaki H."/>
            <person name="Ikema Y."/>
            <person name="Okamoto S."/>
            <person name="Okitani R."/>
            <person name="Kawakami T."/>
            <person name="Noguchi S."/>
            <person name="Itoh T."/>
            <person name="Shigeta K."/>
            <person name="Senba T."/>
            <person name="Matsumura K."/>
            <person name="Nakajima Y."/>
            <person name="Mizuno T."/>
            <person name="Morinaga M."/>
            <person name="Sasaki M."/>
            <person name="Togashi T."/>
            <person name="Oyama M."/>
            <person name="Hata H."/>
            <person name="Watanabe M."/>
            <person name="Komatsu T."/>
            <person name="Mizushima-Sugano J."/>
            <person name="Satoh T."/>
            <person name="Shirai Y."/>
            <person name="Takahashi Y."/>
            <person name="Nakagawa K."/>
            <person name="Okumura K."/>
            <person name="Nagase T."/>
            <person name="Nomura N."/>
            <person name="Kikuchi H."/>
            <person name="Masuho Y."/>
            <person name="Yamashita R."/>
            <person name="Nakai K."/>
            <person name="Yada T."/>
            <person name="Nakamura Y."/>
            <person name="Ohara O."/>
            <person name="Isogai T."/>
            <person name="Sugano S."/>
        </authorList>
    </citation>
    <scope>NUCLEOTIDE SEQUENCE [LARGE SCALE MRNA] (ISOFORM 1)</scope>
    <source>
        <tissue>Hippocampus</tissue>
    </source>
</reference>
<reference key="6">
    <citation type="submission" date="2005-07" db="EMBL/GenBank/DDBJ databases">
        <authorList>
            <person name="Mural R.J."/>
            <person name="Istrail S."/>
            <person name="Sutton G.G."/>
            <person name="Florea L."/>
            <person name="Halpern A.L."/>
            <person name="Mobarry C.M."/>
            <person name="Lippert R."/>
            <person name="Walenz B."/>
            <person name="Shatkay H."/>
            <person name="Dew I."/>
            <person name="Miller J.R."/>
            <person name="Flanigan M.J."/>
            <person name="Edwards N.J."/>
            <person name="Bolanos R."/>
            <person name="Fasulo D."/>
            <person name="Halldorsson B.V."/>
            <person name="Hannenhalli S."/>
            <person name="Turner R."/>
            <person name="Yooseph S."/>
            <person name="Lu F."/>
            <person name="Nusskern D.R."/>
            <person name="Shue B.C."/>
            <person name="Zheng X.H."/>
            <person name="Zhong F."/>
            <person name="Delcher A.L."/>
            <person name="Huson D.H."/>
            <person name="Kravitz S.A."/>
            <person name="Mouchard L."/>
            <person name="Reinert K."/>
            <person name="Remington K.A."/>
            <person name="Clark A.G."/>
            <person name="Waterman M.S."/>
            <person name="Eichler E.E."/>
            <person name="Adams M.D."/>
            <person name="Hunkapiller M.W."/>
            <person name="Myers E.W."/>
            <person name="Venter J.C."/>
        </authorList>
    </citation>
    <scope>NUCLEOTIDE SEQUENCE [LARGE SCALE GENOMIC DNA]</scope>
</reference>
<reference key="7">
    <citation type="journal article" date="2004" name="Genome Res.">
        <title>The status, quality, and expansion of the NIH full-length cDNA project: the Mammalian Gene Collection (MGC).</title>
        <authorList>
            <consortium name="The MGC Project Team"/>
        </authorList>
    </citation>
    <scope>NUCLEOTIDE SEQUENCE [LARGE SCALE MRNA] (ISOFORM 1)</scope>
    <source>
        <tissue>Pancreas</tissue>
    </source>
</reference>
<reference key="8">
    <citation type="journal article" date="1999" name="J. Biol. Chem.">
        <title>Homer 1b regulates the trafficking of group I metabotropic glutamate receptors.</title>
        <authorList>
            <person name="Roche K.W."/>
            <person name="Tu J.C."/>
            <person name="Petralia R.S."/>
            <person name="Xiao B."/>
            <person name="Wenthold R.J."/>
            <person name="Worley P.F."/>
        </authorList>
    </citation>
    <scope>INTERACTION WITH GRM5</scope>
</reference>
<reference key="9">
    <citation type="journal article" date="2000" name="Curr. Opin. Neurobiol.">
        <title>Homer: a link between neural activity and glutamate receptor function.</title>
        <authorList>
            <person name="Xiao B."/>
            <person name="Tu J.C."/>
            <person name="Worley P.F."/>
        </authorList>
    </citation>
    <scope>REVIEW</scope>
</reference>
<reference key="10">
    <citation type="journal article" date="2008" name="Science">
        <title>NFAT binding and regulation of T cell activation by the cytoplasmic scaffolding Homer proteins.</title>
        <authorList>
            <person name="Huang G.N."/>
            <person name="Huso D.L."/>
            <person name="Bouyain S."/>
            <person name="Tu J."/>
            <person name="McCorkell K.A."/>
            <person name="May M.J."/>
            <person name="Zhu Y."/>
            <person name="Lutz M."/>
            <person name="Collins S."/>
            <person name="Dehoff M."/>
            <person name="Kang S."/>
            <person name="Whartenby K."/>
            <person name="Powell J."/>
            <person name="Leahy D."/>
            <person name="Worley P.F."/>
        </authorList>
    </citation>
    <scope>FUNCTION</scope>
    <scope>INTERACTION WITH NFATC4</scope>
</reference>
<reference key="11">
    <citation type="journal article" date="2011" name="BMC Syst. Biol.">
        <title>Initial characterization of the human central proteome.</title>
        <authorList>
            <person name="Burkard T.R."/>
            <person name="Planyavsky M."/>
            <person name="Kaupe I."/>
            <person name="Breitwieser F.P."/>
            <person name="Buerckstuemmer T."/>
            <person name="Bennett K.L."/>
            <person name="Superti-Furga G."/>
            <person name="Colinge J."/>
        </authorList>
    </citation>
    <scope>IDENTIFICATION BY MASS SPECTROMETRY [LARGE SCALE ANALYSIS]</scope>
</reference>
<reference key="12">
    <citation type="journal article" date="2015" name="Hum. Mol. Genet.">
        <title>Biochemical and cellular analysis of Ogden syndrome reveals downstream Nt-acetylation defects.</title>
        <authorList>
            <person name="Myklebust L.M."/>
            <person name="Van Damme P."/>
            <person name="Stoeve S.I."/>
            <person name="Doerfel M.J."/>
            <person name="Abboud A."/>
            <person name="Kalvik T.V."/>
            <person name="Grauffel C."/>
            <person name="Jonckheere V."/>
            <person name="Wu Y."/>
            <person name="Swensen J."/>
            <person name="Kaasa H."/>
            <person name="Liszczak G."/>
            <person name="Marmorstein R."/>
            <person name="Reuter N."/>
            <person name="Lyon G.J."/>
            <person name="Gevaert K."/>
            <person name="Arnesen T."/>
        </authorList>
    </citation>
    <scope>ACETYLATION AT GLY-2</scope>
    <scope>CLEAVAGE OF INITIATOR METHIONINE</scope>
</reference>